<protein>
    <recommendedName>
        <fullName>Serine/threonine-protein phosphatase with EF-hands 1</fullName>
        <shortName>PPEF-1</shortName>
        <ecNumber>3.1.3.16</ecNumber>
    </recommendedName>
</protein>
<proteinExistence type="evidence at transcript level"/>
<organism>
    <name type="scientific">Rattus norvegicus</name>
    <name type="common">Rat</name>
    <dbReference type="NCBI Taxonomy" id="10116"/>
    <lineage>
        <taxon>Eukaryota</taxon>
        <taxon>Metazoa</taxon>
        <taxon>Chordata</taxon>
        <taxon>Craniata</taxon>
        <taxon>Vertebrata</taxon>
        <taxon>Euteleostomi</taxon>
        <taxon>Mammalia</taxon>
        <taxon>Eutheria</taxon>
        <taxon>Euarchontoglires</taxon>
        <taxon>Glires</taxon>
        <taxon>Rodentia</taxon>
        <taxon>Myomorpha</taxon>
        <taxon>Muroidea</taxon>
        <taxon>Muridae</taxon>
        <taxon>Murinae</taxon>
        <taxon>Rattus</taxon>
    </lineage>
</organism>
<accession>Q3SWT6</accession>
<sequence length="640" mass="73966">MGCGSSSKKGKKSEKVVRAALIIQNWYRRYRARLSARQHYALAIFQSIEYADEQGQMQLSSFFSFMLENYTNTHKEDSALVSRLFENTRLESKDREEYVGLIDVPDSYDGPRLQFPLTFTDINLLLQAFKQQQTLHAHYVLEVLFEARKILKQMPNFTRIQTFPAKEITICGDLHGKLDDLMLIFYKNGLPSEKNPYVFNGDFVDRGNNSMEILMILLVSFLVYPTDLHLNRGNHEDFMMNLRYGFTKEILQKYKLHGKKILQVLEELYTWLPIGTIIDNEILVIHGGISESTDLNILQQLQRNKMKSVLMPPMSTNQECNIKKNKAGPSEQSASEQLTKLEWEQIIDLLWSDPRGKKGCYPNTSRGGGCYFGPDVTSKVLNKNQLKMVIRSHECKPDGYEICHDGKVITVFSASNYYEEGSNRGAYIRLSYGTSPQFFQYQVTSTSCLNPLYQRVNAMEFSAFRILKERMIARKTDLINAFELRDHSRTGKISLAQWAFSMESILGLNLPWRSLSSHLVSTDSSGSVDYMSSFDDIHIEKPMKDMKSDLIETMYRYRSDLKIIFNIIDTDQSGLISMDEFRTMWKLFNAHYKVHIDDSQIDELASTMDSNKDGNIDFNEFLRAFYVVHKYETPESPLNK</sequence>
<keyword id="KW-0106">Calcium</keyword>
<keyword id="KW-0378">Hydrolase</keyword>
<keyword id="KW-0460">Magnesium</keyword>
<keyword id="KW-0464">Manganese</keyword>
<keyword id="KW-0479">Metal-binding</keyword>
<keyword id="KW-0904">Protein phosphatase</keyword>
<keyword id="KW-1185">Reference proteome</keyword>
<keyword id="KW-0677">Repeat</keyword>
<feature type="chain" id="PRO_0000294517" description="Serine/threonine-protein phosphatase with EF-hands 1">
    <location>
        <begin position="1"/>
        <end position="640"/>
    </location>
</feature>
<feature type="domain" description="IQ">
    <location>
        <begin position="16"/>
        <end position="45"/>
    </location>
</feature>
<feature type="domain" description="EF-hand 1" evidence="2">
    <location>
        <begin position="473"/>
        <end position="508"/>
    </location>
</feature>
<feature type="domain" description="EF-hand 2" evidence="2">
    <location>
        <begin position="556"/>
        <end position="591"/>
    </location>
</feature>
<feature type="domain" description="EF-hand 3" evidence="2">
    <location>
        <begin position="596"/>
        <end position="631"/>
    </location>
</feature>
<feature type="region of interest" description="Catalytic" evidence="1">
    <location>
        <begin position="122"/>
        <end position="445"/>
    </location>
</feature>
<feature type="active site" description="Proton donor" evidence="1">
    <location>
        <position position="235"/>
    </location>
</feature>
<feature type="binding site" evidence="1">
    <location>
        <position position="173"/>
    </location>
    <ligand>
        <name>Mn(2+)</name>
        <dbReference type="ChEBI" id="CHEBI:29035"/>
        <label>1</label>
    </ligand>
</feature>
<feature type="binding site" evidence="1">
    <location>
        <position position="175"/>
    </location>
    <ligand>
        <name>Mn(2+)</name>
        <dbReference type="ChEBI" id="CHEBI:29035"/>
        <label>1</label>
    </ligand>
</feature>
<feature type="binding site" evidence="1">
    <location>
        <position position="202"/>
    </location>
    <ligand>
        <name>Mn(2+)</name>
        <dbReference type="ChEBI" id="CHEBI:29035"/>
        <label>1</label>
    </ligand>
</feature>
<feature type="binding site" evidence="1">
    <location>
        <position position="202"/>
    </location>
    <ligand>
        <name>Mn(2+)</name>
        <dbReference type="ChEBI" id="CHEBI:29035"/>
        <label>2</label>
    </ligand>
</feature>
<feature type="binding site" evidence="1">
    <location>
        <position position="234"/>
    </location>
    <ligand>
        <name>Mn(2+)</name>
        <dbReference type="ChEBI" id="CHEBI:29035"/>
        <label>2</label>
    </ligand>
</feature>
<feature type="binding site" evidence="1">
    <location>
        <position position="286"/>
    </location>
    <ligand>
        <name>Mn(2+)</name>
        <dbReference type="ChEBI" id="CHEBI:29035"/>
        <label>2</label>
    </ligand>
</feature>
<feature type="binding site" evidence="1">
    <location>
        <position position="393"/>
    </location>
    <ligand>
        <name>Mn(2+)</name>
        <dbReference type="ChEBI" id="CHEBI:29035"/>
        <label>2</label>
    </ligand>
</feature>
<feature type="binding site" evidence="2">
    <location>
        <position position="569"/>
    </location>
    <ligand>
        <name>Ca(2+)</name>
        <dbReference type="ChEBI" id="CHEBI:29108"/>
        <label>1</label>
    </ligand>
</feature>
<feature type="binding site" evidence="2">
    <location>
        <position position="571"/>
    </location>
    <ligand>
        <name>Ca(2+)</name>
        <dbReference type="ChEBI" id="CHEBI:29108"/>
        <label>1</label>
    </ligand>
</feature>
<feature type="binding site" evidence="2">
    <location>
        <position position="573"/>
    </location>
    <ligand>
        <name>Ca(2+)</name>
        <dbReference type="ChEBI" id="CHEBI:29108"/>
        <label>1</label>
    </ligand>
</feature>
<feature type="binding site" evidence="2">
    <location>
        <position position="580"/>
    </location>
    <ligand>
        <name>Ca(2+)</name>
        <dbReference type="ChEBI" id="CHEBI:29108"/>
        <label>1</label>
    </ligand>
</feature>
<feature type="binding site" evidence="2">
    <location>
        <position position="609"/>
    </location>
    <ligand>
        <name>Ca(2+)</name>
        <dbReference type="ChEBI" id="CHEBI:29108"/>
        <label>2</label>
    </ligand>
</feature>
<feature type="binding site" evidence="2">
    <location>
        <position position="611"/>
    </location>
    <ligand>
        <name>Ca(2+)</name>
        <dbReference type="ChEBI" id="CHEBI:29108"/>
        <label>2</label>
    </ligand>
</feature>
<feature type="binding site" evidence="2">
    <location>
        <position position="613"/>
    </location>
    <ligand>
        <name>Ca(2+)</name>
        <dbReference type="ChEBI" id="CHEBI:29108"/>
        <label>2</label>
    </ligand>
</feature>
<feature type="binding site" evidence="2">
    <location>
        <position position="615"/>
    </location>
    <ligand>
        <name>Ca(2+)</name>
        <dbReference type="ChEBI" id="CHEBI:29108"/>
        <label>2</label>
    </ligand>
</feature>
<feature type="binding site" evidence="2">
    <location>
        <position position="620"/>
    </location>
    <ligand>
        <name>Ca(2+)</name>
        <dbReference type="ChEBI" id="CHEBI:29108"/>
        <label>2</label>
    </ligand>
</feature>
<name>PPE1_RAT</name>
<comment type="function">
    <text evidence="1">May have a role in the recovery or adaptation response of photoreceptors. May have a role in development (By similarity).</text>
</comment>
<comment type="catalytic activity">
    <reaction>
        <text>O-phospho-L-seryl-[protein] + H2O = L-seryl-[protein] + phosphate</text>
        <dbReference type="Rhea" id="RHEA:20629"/>
        <dbReference type="Rhea" id="RHEA-COMP:9863"/>
        <dbReference type="Rhea" id="RHEA-COMP:11604"/>
        <dbReference type="ChEBI" id="CHEBI:15377"/>
        <dbReference type="ChEBI" id="CHEBI:29999"/>
        <dbReference type="ChEBI" id="CHEBI:43474"/>
        <dbReference type="ChEBI" id="CHEBI:83421"/>
        <dbReference type="EC" id="3.1.3.16"/>
    </reaction>
</comment>
<comment type="catalytic activity">
    <reaction>
        <text>O-phospho-L-threonyl-[protein] + H2O = L-threonyl-[protein] + phosphate</text>
        <dbReference type="Rhea" id="RHEA:47004"/>
        <dbReference type="Rhea" id="RHEA-COMP:11060"/>
        <dbReference type="Rhea" id="RHEA-COMP:11605"/>
        <dbReference type="ChEBI" id="CHEBI:15377"/>
        <dbReference type="ChEBI" id="CHEBI:30013"/>
        <dbReference type="ChEBI" id="CHEBI:43474"/>
        <dbReference type="ChEBI" id="CHEBI:61977"/>
        <dbReference type="EC" id="3.1.3.16"/>
    </reaction>
</comment>
<comment type="cofactor">
    <cofactor evidence="1">
        <name>Mn(2+)</name>
        <dbReference type="ChEBI" id="CHEBI:29035"/>
    </cofactor>
    <text evidence="1">Binds 2 manganese ions per subunit.</text>
</comment>
<comment type="cofactor">
    <cofactor evidence="1">
        <name>Mg(2+)</name>
        <dbReference type="ChEBI" id="CHEBI:18420"/>
    </cofactor>
</comment>
<comment type="activity regulation">
    <text evidence="1">Activated by calcium.</text>
</comment>
<comment type="similarity">
    <text evidence="3">Belongs to the PPP phosphatase family.</text>
</comment>
<dbReference type="EC" id="3.1.3.16"/>
<dbReference type="EMBL" id="BC104696">
    <property type="protein sequence ID" value="AAI04697.1"/>
    <property type="molecule type" value="mRNA"/>
</dbReference>
<dbReference type="RefSeq" id="NP_001030107.1">
    <property type="nucleotide sequence ID" value="NM_001034935.2"/>
</dbReference>
<dbReference type="RefSeq" id="NP_001421153.1">
    <property type="nucleotide sequence ID" value="NM_001434224.1"/>
</dbReference>
<dbReference type="RefSeq" id="XP_063136153.1">
    <property type="nucleotide sequence ID" value="XM_063280083.1"/>
</dbReference>
<dbReference type="SMR" id="Q3SWT6"/>
<dbReference type="FunCoup" id="Q3SWT6">
    <property type="interactions" value="93"/>
</dbReference>
<dbReference type="STRING" id="10116.ENSRNOP00000055729"/>
<dbReference type="PhosphoSitePlus" id="Q3SWT6"/>
<dbReference type="PaxDb" id="10116-ENSRNOP00000055729"/>
<dbReference type="Ensembl" id="ENSRNOT00000058947.5">
    <property type="protein sequence ID" value="ENSRNOP00000055729.5"/>
    <property type="gene ID" value="ENSRNOG00000027331.7"/>
</dbReference>
<dbReference type="GeneID" id="317498"/>
<dbReference type="KEGG" id="rno:317498"/>
<dbReference type="AGR" id="RGD:1562772"/>
<dbReference type="CTD" id="5475"/>
<dbReference type="RGD" id="1562772">
    <property type="gene designation" value="Ppef1"/>
</dbReference>
<dbReference type="eggNOG" id="KOG0377">
    <property type="taxonomic scope" value="Eukaryota"/>
</dbReference>
<dbReference type="GeneTree" id="ENSGT00940000159830"/>
<dbReference type="InParanoid" id="Q3SWT6"/>
<dbReference type="PhylomeDB" id="Q3SWT6"/>
<dbReference type="Reactome" id="R-RNO-2514859">
    <property type="pathway name" value="Inactivation, recovery and regulation of the phototransduction cascade"/>
</dbReference>
<dbReference type="PRO" id="PR:Q3SWT6"/>
<dbReference type="Proteomes" id="UP000002494">
    <property type="component" value="Chromosome X"/>
</dbReference>
<dbReference type="GO" id="GO:0005829">
    <property type="term" value="C:cytosol"/>
    <property type="evidence" value="ECO:0000318"/>
    <property type="project" value="GO_Central"/>
</dbReference>
<dbReference type="GO" id="GO:0005634">
    <property type="term" value="C:nucleus"/>
    <property type="evidence" value="ECO:0000318"/>
    <property type="project" value="GO_Central"/>
</dbReference>
<dbReference type="GO" id="GO:0005509">
    <property type="term" value="F:calcium ion binding"/>
    <property type="evidence" value="ECO:0007669"/>
    <property type="project" value="InterPro"/>
</dbReference>
<dbReference type="GO" id="GO:0005506">
    <property type="term" value="F:iron ion binding"/>
    <property type="evidence" value="ECO:0007669"/>
    <property type="project" value="InterPro"/>
</dbReference>
<dbReference type="GO" id="GO:0030145">
    <property type="term" value="F:manganese ion binding"/>
    <property type="evidence" value="ECO:0007669"/>
    <property type="project" value="InterPro"/>
</dbReference>
<dbReference type="GO" id="GO:0004722">
    <property type="term" value="F:protein serine/threonine phosphatase activity"/>
    <property type="evidence" value="ECO:0000318"/>
    <property type="project" value="GO_Central"/>
</dbReference>
<dbReference type="GO" id="GO:0050906">
    <property type="term" value="P:detection of stimulus involved in sensory perception"/>
    <property type="evidence" value="ECO:0007669"/>
    <property type="project" value="InterPro"/>
</dbReference>
<dbReference type="CDD" id="cd00051">
    <property type="entry name" value="EFh"/>
    <property type="match status" value="1"/>
</dbReference>
<dbReference type="CDD" id="cd07420">
    <property type="entry name" value="MPP_RdgC"/>
    <property type="match status" value="1"/>
</dbReference>
<dbReference type="FunFam" id="1.10.238.10:FF:000164">
    <property type="entry name" value="Serine/threonine-protein phosphatase with EF-hands"/>
    <property type="match status" value="1"/>
</dbReference>
<dbReference type="FunFam" id="3.60.21.10:FF:000049">
    <property type="entry name" value="Serine/threonine-protein phosphatase with EF-hands"/>
    <property type="match status" value="1"/>
</dbReference>
<dbReference type="Gene3D" id="3.60.21.10">
    <property type="match status" value="1"/>
</dbReference>
<dbReference type="Gene3D" id="1.10.238.10">
    <property type="entry name" value="EF-hand"/>
    <property type="match status" value="1"/>
</dbReference>
<dbReference type="InterPro" id="IPR004843">
    <property type="entry name" value="Calcineurin-like_PHP_ApaH"/>
</dbReference>
<dbReference type="InterPro" id="IPR011992">
    <property type="entry name" value="EF-hand-dom_pair"/>
</dbReference>
<dbReference type="InterPro" id="IPR018247">
    <property type="entry name" value="EF_Hand_1_Ca_BS"/>
</dbReference>
<dbReference type="InterPro" id="IPR002048">
    <property type="entry name" value="EF_hand_dom"/>
</dbReference>
<dbReference type="InterPro" id="IPR029052">
    <property type="entry name" value="Metallo-depent_PP-like"/>
</dbReference>
<dbReference type="InterPro" id="IPR013235">
    <property type="entry name" value="PPP_dom"/>
</dbReference>
<dbReference type="InterPro" id="IPR051134">
    <property type="entry name" value="PPP_phosphatase"/>
</dbReference>
<dbReference type="InterPro" id="IPR012008">
    <property type="entry name" value="Ser/Thr-Pase_EF-hand_contain"/>
</dbReference>
<dbReference type="InterPro" id="IPR006186">
    <property type="entry name" value="Ser/Thr-sp_prot-phosphatase"/>
</dbReference>
<dbReference type="PANTHER" id="PTHR45668">
    <property type="entry name" value="SERINE/THREONINE-PROTEIN PHOSPHATASE 5-RELATED"/>
    <property type="match status" value="1"/>
</dbReference>
<dbReference type="PANTHER" id="PTHR45668:SF1">
    <property type="entry name" value="SERINE_THREONINE-PROTEIN PHOSPHATASE WITH EF-HANDS 1"/>
    <property type="match status" value="1"/>
</dbReference>
<dbReference type="Pfam" id="PF13499">
    <property type="entry name" value="EF-hand_7"/>
    <property type="match status" value="1"/>
</dbReference>
<dbReference type="Pfam" id="PF00149">
    <property type="entry name" value="Metallophos"/>
    <property type="match status" value="1"/>
</dbReference>
<dbReference type="Pfam" id="PF08321">
    <property type="entry name" value="PPP5"/>
    <property type="match status" value="1"/>
</dbReference>
<dbReference type="PIRSF" id="PIRSF000912">
    <property type="entry name" value="PPEF"/>
    <property type="match status" value="1"/>
</dbReference>
<dbReference type="PRINTS" id="PR00114">
    <property type="entry name" value="STPHPHTASE"/>
</dbReference>
<dbReference type="SMART" id="SM00054">
    <property type="entry name" value="EFh"/>
    <property type="match status" value="2"/>
</dbReference>
<dbReference type="SMART" id="SM00156">
    <property type="entry name" value="PP2Ac"/>
    <property type="match status" value="1"/>
</dbReference>
<dbReference type="SUPFAM" id="SSF47473">
    <property type="entry name" value="EF-hand"/>
    <property type="match status" value="1"/>
</dbReference>
<dbReference type="SUPFAM" id="SSF56300">
    <property type="entry name" value="Metallo-dependent phosphatases"/>
    <property type="match status" value="1"/>
</dbReference>
<dbReference type="PROSITE" id="PS00018">
    <property type="entry name" value="EF_HAND_1"/>
    <property type="match status" value="2"/>
</dbReference>
<dbReference type="PROSITE" id="PS50222">
    <property type="entry name" value="EF_HAND_2"/>
    <property type="match status" value="3"/>
</dbReference>
<dbReference type="PROSITE" id="PS00125">
    <property type="entry name" value="SER_THR_PHOSPHATASE"/>
    <property type="match status" value="1"/>
</dbReference>
<gene>
    <name type="primary">Ppef1</name>
</gene>
<evidence type="ECO:0000250" key="1"/>
<evidence type="ECO:0000255" key="2">
    <source>
        <dbReference type="PROSITE-ProRule" id="PRU00448"/>
    </source>
</evidence>
<evidence type="ECO:0000305" key="3"/>
<reference key="1">
    <citation type="journal article" date="2004" name="Genome Res.">
        <title>The status, quality, and expansion of the NIH full-length cDNA project: the Mammalian Gene Collection (MGC).</title>
        <authorList>
            <consortium name="The MGC Project Team"/>
        </authorList>
    </citation>
    <scope>NUCLEOTIDE SEQUENCE [LARGE SCALE MRNA]</scope>
    <source>
        <tissue>Testis</tissue>
    </source>
</reference>